<reference key="1">
    <citation type="journal article" date="2005" name="Nature">
        <title>Sequencing of Aspergillus nidulans and comparative analysis with A. fumigatus and A. oryzae.</title>
        <authorList>
            <person name="Galagan J.E."/>
            <person name="Calvo S.E."/>
            <person name="Cuomo C."/>
            <person name="Ma L.-J."/>
            <person name="Wortman J.R."/>
            <person name="Batzoglou S."/>
            <person name="Lee S.-I."/>
            <person name="Bastuerkmen M."/>
            <person name="Spevak C.C."/>
            <person name="Clutterbuck J."/>
            <person name="Kapitonov V."/>
            <person name="Jurka J."/>
            <person name="Scazzocchio C."/>
            <person name="Farman M.L."/>
            <person name="Butler J."/>
            <person name="Purcell S."/>
            <person name="Harris S."/>
            <person name="Braus G.H."/>
            <person name="Draht O."/>
            <person name="Busch S."/>
            <person name="D'Enfert C."/>
            <person name="Bouchier C."/>
            <person name="Goldman G.H."/>
            <person name="Bell-Pedersen D."/>
            <person name="Griffiths-Jones S."/>
            <person name="Doonan J.H."/>
            <person name="Yu J."/>
            <person name="Vienken K."/>
            <person name="Pain A."/>
            <person name="Freitag M."/>
            <person name="Selker E.U."/>
            <person name="Archer D.B."/>
            <person name="Penalva M.A."/>
            <person name="Oakley B.R."/>
            <person name="Momany M."/>
            <person name="Tanaka T."/>
            <person name="Kumagai T."/>
            <person name="Asai K."/>
            <person name="Machida M."/>
            <person name="Nierman W.C."/>
            <person name="Denning D.W."/>
            <person name="Caddick M.X."/>
            <person name="Hynes M."/>
            <person name="Paoletti M."/>
            <person name="Fischer R."/>
            <person name="Miller B.L."/>
            <person name="Dyer P.S."/>
            <person name="Sachs M.S."/>
            <person name="Osmani S.A."/>
            <person name="Birren B.W."/>
        </authorList>
    </citation>
    <scope>NUCLEOTIDE SEQUENCE [LARGE SCALE GENOMIC DNA]</scope>
    <source>
        <strain>FGSC A4 / ATCC 38163 / CBS 112.46 / NRRL 194 / M139</strain>
    </source>
</reference>
<reference key="2">
    <citation type="journal article" date="2009" name="Fungal Genet. Biol.">
        <title>The 2008 update of the Aspergillus nidulans genome annotation: a community effort.</title>
        <authorList>
            <person name="Wortman J.R."/>
            <person name="Gilsenan J.M."/>
            <person name="Joardar V."/>
            <person name="Deegan J."/>
            <person name="Clutterbuck J."/>
            <person name="Andersen M.R."/>
            <person name="Archer D."/>
            <person name="Bencina M."/>
            <person name="Braus G."/>
            <person name="Coutinho P."/>
            <person name="von Dohren H."/>
            <person name="Doonan J."/>
            <person name="Driessen A.J."/>
            <person name="Durek P."/>
            <person name="Espeso E."/>
            <person name="Fekete E."/>
            <person name="Flipphi M."/>
            <person name="Estrada C.G."/>
            <person name="Geysens S."/>
            <person name="Goldman G."/>
            <person name="de Groot P.W."/>
            <person name="Hansen K."/>
            <person name="Harris S.D."/>
            <person name="Heinekamp T."/>
            <person name="Helmstaedt K."/>
            <person name="Henrissat B."/>
            <person name="Hofmann G."/>
            <person name="Homan T."/>
            <person name="Horio T."/>
            <person name="Horiuchi H."/>
            <person name="James S."/>
            <person name="Jones M."/>
            <person name="Karaffa L."/>
            <person name="Karanyi Z."/>
            <person name="Kato M."/>
            <person name="Keller N."/>
            <person name="Kelly D.E."/>
            <person name="Kiel J.A."/>
            <person name="Kim J.M."/>
            <person name="van der Klei I.J."/>
            <person name="Klis F.M."/>
            <person name="Kovalchuk A."/>
            <person name="Krasevec N."/>
            <person name="Kubicek C.P."/>
            <person name="Liu B."/>
            <person name="Maccabe A."/>
            <person name="Meyer V."/>
            <person name="Mirabito P."/>
            <person name="Miskei M."/>
            <person name="Mos M."/>
            <person name="Mullins J."/>
            <person name="Nelson D.R."/>
            <person name="Nielsen J."/>
            <person name="Oakley B.R."/>
            <person name="Osmani S.A."/>
            <person name="Pakula T."/>
            <person name="Paszewski A."/>
            <person name="Paulsen I."/>
            <person name="Pilsyk S."/>
            <person name="Pocsi I."/>
            <person name="Punt P.J."/>
            <person name="Ram A.F."/>
            <person name="Ren Q."/>
            <person name="Robellet X."/>
            <person name="Robson G."/>
            <person name="Seiboth B."/>
            <person name="van Solingen P."/>
            <person name="Specht T."/>
            <person name="Sun J."/>
            <person name="Taheri-Talesh N."/>
            <person name="Takeshita N."/>
            <person name="Ussery D."/>
            <person name="vanKuyk P.A."/>
            <person name="Visser H."/>
            <person name="van de Vondervoort P.J."/>
            <person name="de Vries R.P."/>
            <person name="Walton J."/>
            <person name="Xiang X."/>
            <person name="Xiong Y."/>
            <person name="Zeng A.P."/>
            <person name="Brandt B.W."/>
            <person name="Cornell M.J."/>
            <person name="van den Hondel C.A."/>
            <person name="Visser J."/>
            <person name="Oliver S.G."/>
            <person name="Turner G."/>
        </authorList>
    </citation>
    <scope>GENOME REANNOTATION</scope>
    <source>
        <strain>FGSC A4 / ATCC 38163 / CBS 112.46 / NRRL 194 / M139</strain>
    </source>
</reference>
<name>RUVB2_EMENI</name>
<organism>
    <name type="scientific">Emericella nidulans (strain FGSC A4 / ATCC 38163 / CBS 112.46 / NRRL 194 / M139)</name>
    <name type="common">Aspergillus nidulans</name>
    <dbReference type="NCBI Taxonomy" id="227321"/>
    <lineage>
        <taxon>Eukaryota</taxon>
        <taxon>Fungi</taxon>
        <taxon>Dikarya</taxon>
        <taxon>Ascomycota</taxon>
        <taxon>Pezizomycotina</taxon>
        <taxon>Eurotiomycetes</taxon>
        <taxon>Eurotiomycetidae</taxon>
        <taxon>Eurotiales</taxon>
        <taxon>Aspergillaceae</taxon>
        <taxon>Aspergillus</taxon>
        <taxon>Aspergillus subgen. Nidulantes</taxon>
    </lineage>
</organism>
<gene>
    <name type="primary">rvb2</name>
    <name type="ORF">AN0327</name>
</gene>
<dbReference type="EC" id="3.6.4.12"/>
<dbReference type="EMBL" id="AACD01000006">
    <property type="protein sequence ID" value="EAA65733.1"/>
    <property type="status" value="ALT_SEQ"/>
    <property type="molecule type" value="Genomic_DNA"/>
</dbReference>
<dbReference type="EMBL" id="BN001308">
    <property type="protein sequence ID" value="CBF89714.1"/>
    <property type="molecule type" value="Genomic_DNA"/>
</dbReference>
<dbReference type="RefSeq" id="XP_657931.1">
    <property type="nucleotide sequence ID" value="XM_652839.1"/>
</dbReference>
<dbReference type="SMR" id="Q5BGK3"/>
<dbReference type="FunCoup" id="Q5BGK3">
    <property type="interactions" value="1386"/>
</dbReference>
<dbReference type="STRING" id="227321.Q5BGK3"/>
<dbReference type="EnsemblFungi" id="CBF89714">
    <property type="protein sequence ID" value="CBF89714"/>
    <property type="gene ID" value="ANIA_00327"/>
</dbReference>
<dbReference type="KEGG" id="ani:ANIA_00327"/>
<dbReference type="VEuPathDB" id="FungiDB:AN0327"/>
<dbReference type="eggNOG" id="KOG2680">
    <property type="taxonomic scope" value="Eukaryota"/>
</dbReference>
<dbReference type="HOGENOM" id="CLU_028311_4_0_1"/>
<dbReference type="InParanoid" id="Q5BGK3"/>
<dbReference type="OMA" id="IINTEPY"/>
<dbReference type="OrthoDB" id="10060499at2759"/>
<dbReference type="Proteomes" id="UP000000560">
    <property type="component" value="Chromosome VIII"/>
</dbReference>
<dbReference type="GO" id="GO:0031011">
    <property type="term" value="C:Ino80 complex"/>
    <property type="evidence" value="ECO:0000318"/>
    <property type="project" value="GO_Central"/>
</dbReference>
<dbReference type="GO" id="GO:0035267">
    <property type="term" value="C:NuA4 histone acetyltransferase complex"/>
    <property type="evidence" value="ECO:0000318"/>
    <property type="project" value="GO_Central"/>
</dbReference>
<dbReference type="GO" id="GO:0097255">
    <property type="term" value="C:R2TP complex"/>
    <property type="evidence" value="ECO:0000318"/>
    <property type="project" value="GO_Central"/>
</dbReference>
<dbReference type="GO" id="GO:0000812">
    <property type="term" value="C:Swr1 complex"/>
    <property type="evidence" value="ECO:0000318"/>
    <property type="project" value="GO_Central"/>
</dbReference>
<dbReference type="GO" id="GO:0043138">
    <property type="term" value="F:3'-5' DNA helicase activity"/>
    <property type="evidence" value="ECO:0007669"/>
    <property type="project" value="EnsemblFungi"/>
</dbReference>
<dbReference type="GO" id="GO:0043139">
    <property type="term" value="F:5'-3' DNA helicase activity"/>
    <property type="evidence" value="ECO:0007669"/>
    <property type="project" value="EnsemblFungi"/>
</dbReference>
<dbReference type="GO" id="GO:0005524">
    <property type="term" value="F:ATP binding"/>
    <property type="evidence" value="ECO:0007669"/>
    <property type="project" value="UniProtKB-KW"/>
</dbReference>
<dbReference type="GO" id="GO:0016887">
    <property type="term" value="F:ATP hydrolysis activity"/>
    <property type="evidence" value="ECO:0007669"/>
    <property type="project" value="InterPro"/>
</dbReference>
<dbReference type="GO" id="GO:0003678">
    <property type="term" value="F:DNA helicase activity"/>
    <property type="evidence" value="ECO:0000318"/>
    <property type="project" value="GO_Central"/>
</dbReference>
<dbReference type="GO" id="GO:0000492">
    <property type="term" value="P:box C/D snoRNP assembly"/>
    <property type="evidence" value="ECO:0000318"/>
    <property type="project" value="GO_Central"/>
</dbReference>
<dbReference type="GO" id="GO:0006338">
    <property type="term" value="P:chromatin remodeling"/>
    <property type="evidence" value="ECO:0000318"/>
    <property type="project" value="GO_Central"/>
</dbReference>
<dbReference type="GO" id="GO:0006281">
    <property type="term" value="P:DNA repair"/>
    <property type="evidence" value="ECO:0007669"/>
    <property type="project" value="UniProtKB-KW"/>
</dbReference>
<dbReference type="GO" id="GO:0006357">
    <property type="term" value="P:regulation of transcription by RNA polymerase II"/>
    <property type="evidence" value="ECO:0000318"/>
    <property type="project" value="GO_Central"/>
</dbReference>
<dbReference type="GO" id="GO:0006364">
    <property type="term" value="P:rRNA processing"/>
    <property type="evidence" value="ECO:0007669"/>
    <property type="project" value="UniProtKB-KW"/>
</dbReference>
<dbReference type="FunFam" id="3.40.50.300:FF:002221">
    <property type="entry name" value="RuvB-like 2"/>
    <property type="match status" value="2"/>
</dbReference>
<dbReference type="FunFam" id="1.10.8.60:FF:000010">
    <property type="entry name" value="RuvB-like helicase"/>
    <property type="match status" value="1"/>
</dbReference>
<dbReference type="FunFam" id="2.40.50.360:FF:000002">
    <property type="entry name" value="RuvB-like helicase"/>
    <property type="match status" value="1"/>
</dbReference>
<dbReference type="Gene3D" id="1.10.8.60">
    <property type="match status" value="1"/>
</dbReference>
<dbReference type="Gene3D" id="3.40.50.300">
    <property type="entry name" value="P-loop containing nucleotide triphosphate hydrolases"/>
    <property type="match status" value="1"/>
</dbReference>
<dbReference type="Gene3D" id="2.40.50.360">
    <property type="entry name" value="RuvB-like helicase, domain II"/>
    <property type="match status" value="1"/>
</dbReference>
<dbReference type="InterPro" id="IPR003593">
    <property type="entry name" value="AAA+_ATPase"/>
</dbReference>
<dbReference type="InterPro" id="IPR027417">
    <property type="entry name" value="P-loop_NTPase"/>
</dbReference>
<dbReference type="InterPro" id="IPR027238">
    <property type="entry name" value="RuvB-like"/>
</dbReference>
<dbReference type="InterPro" id="IPR041048">
    <property type="entry name" value="RuvB-like_C"/>
</dbReference>
<dbReference type="InterPro" id="IPR042487">
    <property type="entry name" value="RuvBL1/2_DNA/RNA_bd_dom"/>
</dbReference>
<dbReference type="InterPro" id="IPR010339">
    <property type="entry name" value="TIP49_P-loop"/>
</dbReference>
<dbReference type="PANTHER" id="PTHR11093">
    <property type="entry name" value="RUVB-RELATED REPTIN AND PONTIN"/>
    <property type="match status" value="1"/>
</dbReference>
<dbReference type="Pfam" id="PF06068">
    <property type="entry name" value="TIP49"/>
    <property type="match status" value="1"/>
</dbReference>
<dbReference type="Pfam" id="PF17856">
    <property type="entry name" value="TIP49_C"/>
    <property type="match status" value="1"/>
</dbReference>
<dbReference type="SMART" id="SM00382">
    <property type="entry name" value="AAA"/>
    <property type="match status" value="1"/>
</dbReference>
<dbReference type="SUPFAM" id="SSF52540">
    <property type="entry name" value="P-loop containing nucleoside triphosphate hydrolases"/>
    <property type="match status" value="1"/>
</dbReference>
<sequence length="468" mass="51460">MAAPISTVAESKELRGLNLIAAHSHIRGLGVDVDSLQPRPASQGLVGQEKARKAAAVILQMVKEGKIAGRAVLIAGPPSTGKTAIAMGMAQSLGPDVPFTMLAASEIFSMEMSKTEALTQAFRKSIGVRIKEESEIIEGEVVEIQIDRSVTGGNKQGKLTIKTTDMETIYDMGTKMIDSMTKERVMAGDIISIDKSSGKITKLGRSYARSRDYDAMGADVKFVQCPEGELQVRKEIVHTVSLHEIDVINSRSQGFLALFSGDTGEIRSEVRDQINVKVAEWKEEGKAEIIPGVLFIDEVHMLDIECYSYINRALEAELAPIVIMASNRGHSRIRGTTYNSPHGLPLDFLDRVVIVSTQHYSADEIRQILAIRAQEEEIDLSPDALALLTKIGQESNLRYASNIITTSHLLSQKRKAKEVSVDDVQRSYRLFYDPARSVKFVNQYEQRFIGDQGNVNFTASNGDAMEIS</sequence>
<protein>
    <recommendedName>
        <fullName>RuvB-like helicase 2</fullName>
        <ecNumber>3.6.4.12</ecNumber>
    </recommendedName>
</protein>
<feature type="chain" id="PRO_0000165668" description="RuvB-like helicase 2">
    <location>
        <begin position="1"/>
        <end position="468"/>
    </location>
</feature>
<feature type="binding site" evidence="1">
    <location>
        <begin position="76"/>
        <end position="83"/>
    </location>
    <ligand>
        <name>ATP</name>
        <dbReference type="ChEBI" id="CHEBI:30616"/>
    </ligand>
</feature>
<evidence type="ECO:0000250" key="1"/>
<evidence type="ECO:0000305" key="2"/>
<keyword id="KW-0010">Activator</keyword>
<keyword id="KW-0067">ATP-binding</keyword>
<keyword id="KW-0156">Chromatin regulator</keyword>
<keyword id="KW-0227">DNA damage</keyword>
<keyword id="KW-0234">DNA repair</keyword>
<keyword id="KW-0347">Helicase</keyword>
<keyword id="KW-0378">Hydrolase</keyword>
<keyword id="KW-0547">Nucleotide-binding</keyword>
<keyword id="KW-0539">Nucleus</keyword>
<keyword id="KW-1185">Reference proteome</keyword>
<keyword id="KW-0698">rRNA processing</keyword>
<keyword id="KW-0804">Transcription</keyword>
<keyword id="KW-0805">Transcription regulation</keyword>
<accession>Q5BGK3</accession>
<accession>C8VU13</accession>
<proteinExistence type="inferred from homology"/>
<comment type="function">
    <text evidence="1">DNA helicase which participates in several chromatin remodeling complexes, including the SWR1 and the INO80 complexes. The SWR1 complex mediates the ATP-dependent exchange of histone H2A for the H2A variant HZT1 leading to transcriptional regulation of selected genes by chromatin remodeling. The INO80 complex remodels chromatin by shifting nucleosomes and is involved in DNA repair. Also involved in pre-rRNA processing (By similarity).</text>
</comment>
<comment type="catalytic activity">
    <reaction>
        <text>ATP + H2O = ADP + phosphate + H(+)</text>
        <dbReference type="Rhea" id="RHEA:13065"/>
        <dbReference type="ChEBI" id="CHEBI:15377"/>
        <dbReference type="ChEBI" id="CHEBI:15378"/>
        <dbReference type="ChEBI" id="CHEBI:30616"/>
        <dbReference type="ChEBI" id="CHEBI:43474"/>
        <dbReference type="ChEBI" id="CHEBI:456216"/>
        <dbReference type="EC" id="3.6.4.12"/>
    </reaction>
</comment>
<comment type="subunit">
    <text evidence="1">May form heterododecamers with RVB1. Component of the SWR1 chromatin remodeling complex, the INO80 chromatin remodeling complex, and of the R2TP complex (By similarity).</text>
</comment>
<comment type="subcellular location">
    <subcellularLocation>
        <location evidence="1">Nucleus</location>
    </subcellularLocation>
</comment>
<comment type="similarity">
    <text evidence="2">Belongs to the RuvB family.</text>
</comment>
<comment type="sequence caution" evidence="2">
    <conflict type="erroneous gene model prediction">
        <sequence resource="EMBL-CDS" id="EAA65733"/>
    </conflict>
</comment>